<comment type="function">
    <text evidence="2">Induces apoptosis of host cells via activation of NF-kappa-B.</text>
</comment>
<comment type="subunit">
    <text evidence="1 3">Forms a tight 1:1 complex with EsxU (PubMed:20085764, PubMed:29559126). Complex formation results in induction of alpha-helical conformation and stability against chemical denaturation (PubMed:29559126).</text>
</comment>
<comment type="subcellular location">
    <subcellularLocation>
        <location evidence="6">Secreted</location>
    </subcellularLocation>
    <text evidence="6">Probably secreted via the ESX-4 / type VII secretion system (T7SS).</text>
</comment>
<comment type="developmental stage">
    <text evidence="3">Actively produced during the active phase of tuberculosis.</text>
</comment>
<comment type="miscellaneous">
    <text evidence="3">Elicits strong humoral responses. Induces significant lymphocyte proliferation and up-regulates the induction of TNF-alpha and IL-6 in tuberculosis patients.</text>
</comment>
<comment type="similarity">
    <text evidence="6">Belongs to the WXG100 family. ESAT-6 subfamily.</text>
</comment>
<proteinExistence type="evidence at protein level"/>
<feature type="chain" id="PRO_0000436933" description="ESAT-6-like protein EsxT">
    <location>
        <begin position="1"/>
        <end position="100"/>
    </location>
</feature>
<protein>
    <recommendedName>
        <fullName evidence="5">ESAT-6-like protein EsxT</fullName>
    </recommendedName>
</protein>
<reference key="1">
    <citation type="journal article" date="1998" name="Nature">
        <title>Deciphering the biology of Mycobacterium tuberculosis from the complete genome sequence.</title>
        <authorList>
            <person name="Cole S.T."/>
            <person name="Brosch R."/>
            <person name="Parkhill J."/>
            <person name="Garnier T."/>
            <person name="Churcher C.M."/>
            <person name="Harris D.E."/>
            <person name="Gordon S.V."/>
            <person name="Eiglmeier K."/>
            <person name="Gas S."/>
            <person name="Barry C.E. III"/>
            <person name="Tekaia F."/>
            <person name="Badcock K."/>
            <person name="Basham D."/>
            <person name="Brown D."/>
            <person name="Chillingworth T."/>
            <person name="Connor R."/>
            <person name="Davies R.M."/>
            <person name="Devlin K."/>
            <person name="Feltwell T."/>
            <person name="Gentles S."/>
            <person name="Hamlin N."/>
            <person name="Holroyd S."/>
            <person name="Hornsby T."/>
            <person name="Jagels K."/>
            <person name="Krogh A."/>
            <person name="McLean J."/>
            <person name="Moule S."/>
            <person name="Murphy L.D."/>
            <person name="Oliver S."/>
            <person name="Osborne J."/>
            <person name="Quail M.A."/>
            <person name="Rajandream M.A."/>
            <person name="Rogers J."/>
            <person name="Rutter S."/>
            <person name="Seeger K."/>
            <person name="Skelton S."/>
            <person name="Squares S."/>
            <person name="Squares R."/>
            <person name="Sulston J.E."/>
            <person name="Taylor K."/>
            <person name="Whitehead S."/>
            <person name="Barrell B.G."/>
        </authorList>
    </citation>
    <scope>NUCLEOTIDE SEQUENCE [LARGE SCALE GENOMIC DNA]</scope>
    <source>
        <strain>ATCC 25618 / H37Rv</strain>
    </source>
</reference>
<reference key="2">
    <citation type="journal article" date="2009" name="PLoS Pathog.">
        <title>Systematic genetic nomenclature for type VII secretion systems.</title>
        <authorList>
            <person name="Bitter W."/>
            <person name="Houben E.N."/>
            <person name="Bottai D."/>
            <person name="Brodin P."/>
            <person name="Brown E.J."/>
            <person name="Cox J.S."/>
            <person name="Derbyshire K."/>
            <person name="Fortune S.M."/>
            <person name="Gao L.Y."/>
            <person name="Liu J."/>
            <person name="Gey van Pittius N.C."/>
            <person name="Pym A.S."/>
            <person name="Rubin E.J."/>
            <person name="Sherman D.R."/>
            <person name="Cole S.T."/>
            <person name="Brosch R."/>
        </authorList>
    </citation>
    <scope>NOMENCLATURE</scope>
</reference>
<reference key="3">
    <citation type="journal article" date="2010" name="FEBS Lett.">
        <title>Stoichiometric protein complex formation and over-expression using the prokaryotic native operon structure.</title>
        <authorList>
            <person name="Poulsen C."/>
            <person name="Holton S."/>
            <person name="Geerlof A."/>
            <person name="Wilmanns M."/>
            <person name="Song Y.H."/>
        </authorList>
    </citation>
    <scope>SUBUNIT</scope>
    <source>
        <strain>ATCC 25618 / H37Rv</strain>
    </source>
</reference>
<reference key="4">
    <citation type="journal article" date="2014" name="Biochem. Biophys. Res. Commun.">
        <title>A novel firefly luciferase biosensor enhances the detection of apoptosis induced by ESAT-6 family proteins of Mycobacterium tuberculosis.</title>
        <authorList>
            <person name="Shi J."/>
            <person name="Zhang H."/>
            <person name="Fang L."/>
            <person name="Xi Y."/>
            <person name="Zhou Y."/>
            <person name="Luo R."/>
            <person name="Wang D."/>
            <person name="Xiao S."/>
            <person name="Chen H."/>
        </authorList>
    </citation>
    <scope>FUNCTION IN VIRULENCE</scope>
    <source>
        <strain>H37Rv</strain>
    </source>
</reference>
<reference key="5">
    <citation type="journal article" date="2018" name="Tuberculosis">
        <title>Biophysical and immunological characterization of the ESX-4 system ESAT-6 family proteins Rv3444c and Rv3445c from Mycobacterium tuberculosis H37Rv.</title>
        <authorList>
            <person name="Pandey H."/>
            <person name="Fatma F."/>
            <person name="Yabaji S.M."/>
            <person name="Kumari M."/>
            <person name="Tripathi S."/>
            <person name="Srivastava K."/>
            <person name="Tripathi D.K."/>
            <person name="Kant S."/>
            <person name="Srivastava K.K."/>
            <person name="Arora A."/>
        </authorList>
    </citation>
    <scope>SUBUNIT</scope>
    <scope>INTERACTION WITH ESXU</scope>
    <scope>DEVELOPMENTAL STAGE</scope>
    <scope>HUMORAL RESPONSE</scope>
    <source>
        <strain>H37Rv</strain>
    </source>
</reference>
<evidence type="ECO:0000269" key="1">
    <source>
    </source>
</evidence>
<evidence type="ECO:0000269" key="2">
    <source>
    </source>
</evidence>
<evidence type="ECO:0000269" key="3">
    <source>
    </source>
</evidence>
<evidence type="ECO:0000303" key="4">
    <source>
    </source>
</evidence>
<evidence type="ECO:0000305" key="5"/>
<evidence type="ECO:0000305" key="6">
    <source>
    </source>
</evidence>
<evidence type="ECO:0000312" key="7">
    <source>
        <dbReference type="EMBL" id="CCP46266.1"/>
    </source>
</evidence>
<organism>
    <name type="scientific">Mycobacterium tuberculosis (strain ATCC 25618 / H37Rv)</name>
    <dbReference type="NCBI Taxonomy" id="83332"/>
    <lineage>
        <taxon>Bacteria</taxon>
        <taxon>Bacillati</taxon>
        <taxon>Actinomycetota</taxon>
        <taxon>Actinomycetes</taxon>
        <taxon>Mycobacteriales</taxon>
        <taxon>Mycobacteriaceae</taxon>
        <taxon>Mycobacterium</taxon>
        <taxon>Mycobacterium tuberculosis complex</taxon>
    </lineage>
</organism>
<gene>
    <name evidence="4" type="primary">esxT</name>
    <name evidence="7" type="ordered locus">Rv3444c</name>
</gene>
<dbReference type="EMBL" id="AL123456">
    <property type="protein sequence ID" value="CCP46266.1"/>
    <property type="molecule type" value="Genomic_DNA"/>
</dbReference>
<dbReference type="RefSeq" id="NP_217961.1">
    <property type="nucleotide sequence ID" value="NC_000962.3"/>
</dbReference>
<dbReference type="RefSeq" id="WP_003900059.1">
    <property type="nucleotide sequence ID" value="NZ_NVQJ01000065.1"/>
</dbReference>
<dbReference type="SMR" id="I6YC53"/>
<dbReference type="STRING" id="83332.Rv3444c"/>
<dbReference type="PaxDb" id="83332-Rv3444c"/>
<dbReference type="DNASU" id="887587"/>
<dbReference type="GeneID" id="887587"/>
<dbReference type="KEGG" id="mtu:Rv3444c"/>
<dbReference type="KEGG" id="mtv:RVBD_3444c"/>
<dbReference type="PATRIC" id="fig|83332.111.peg.3839"/>
<dbReference type="TubercuList" id="Rv3444c"/>
<dbReference type="eggNOG" id="COG4842">
    <property type="taxonomic scope" value="Bacteria"/>
</dbReference>
<dbReference type="HOGENOM" id="CLU_151185_3_4_11"/>
<dbReference type="InParanoid" id="I6YC53"/>
<dbReference type="OrthoDB" id="3387628at2"/>
<dbReference type="Proteomes" id="UP000001584">
    <property type="component" value="Chromosome"/>
</dbReference>
<dbReference type="GO" id="GO:0005576">
    <property type="term" value="C:extracellular region"/>
    <property type="evidence" value="ECO:0007669"/>
    <property type="project" value="UniProtKB-SubCell"/>
</dbReference>
<dbReference type="Gene3D" id="1.10.287.1060">
    <property type="entry name" value="ESAT-6-like"/>
    <property type="match status" value="1"/>
</dbReference>
<dbReference type="InterPro" id="IPR036689">
    <property type="entry name" value="ESAT-6-like_sf"/>
</dbReference>
<dbReference type="InterPro" id="IPR010310">
    <property type="entry name" value="T7SS_ESAT-6-like"/>
</dbReference>
<dbReference type="NCBIfam" id="TIGR03930">
    <property type="entry name" value="WXG100_ESAT6"/>
    <property type="match status" value="1"/>
</dbReference>
<dbReference type="Pfam" id="PF06013">
    <property type="entry name" value="WXG100"/>
    <property type="match status" value="1"/>
</dbReference>
<dbReference type="SUPFAM" id="SSF140453">
    <property type="entry name" value="EsxAB dimer-like"/>
    <property type="match status" value="1"/>
</dbReference>
<accession>I6YC53</accession>
<name>ESXT_MYCTU</name>
<keyword id="KW-1185">Reference proteome</keyword>
<keyword id="KW-0964">Secreted</keyword>
<keyword id="KW-0843">Virulence</keyword>
<sequence length="100" mass="11120">MNADPVLSYNFDAIEYSVRQEIHTTAARFNAALQELRSQIAPLQQLWTREAAAAYHAEQLKWHQAASALNEILIDLGNAVRHGADDVAHADRRAAGAWAR</sequence>